<sequence>MMKKPVVIGLAVVVLAAVVAGGYWWYQSRQDNGLTLYGNVDIRTVNLSFRVGGRVESLAVDEGDAIKAGQVLGELDHKPYEIALMQAKAGVSVAQAQYDLMLAGYRDEEIAQAAAAVKQAQAAYDYAQNFYNRQQGLWKSRTISANDLENARSSRDQAQATLKSAQDKLRQYRSGNREQDIAQAKASLEQAQAQLAQAELNLQDSTLIAPSDGTLLTRAVEPGTVLNEGGTVFTVSLTRPVWVRAYVDERNLDQAQPGRKVLLYTDGRPDKPYHGQIGFVSPTAEFTPKTVETPDLRTDLVYRLRIVVTDADDALRQGMPVTVQFGNEAGHE</sequence>
<evidence type="ECO:0000255" key="1">
    <source>
        <dbReference type="HAMAP-Rule" id="MF_01304"/>
    </source>
</evidence>
<accession>B6I7V1</accession>
<proteinExistence type="inferred from homology"/>
<comment type="subcellular location">
    <subcellularLocation>
        <location evidence="1">Periplasm</location>
    </subcellularLocation>
</comment>
<comment type="similarity">
    <text evidence="1">Belongs to the UPF0194 family.</text>
</comment>
<dbReference type="EMBL" id="AP009240">
    <property type="protein sequence ID" value="BAG76374.1"/>
    <property type="molecule type" value="Genomic_DNA"/>
</dbReference>
<dbReference type="SMR" id="B6I7V1"/>
<dbReference type="KEGG" id="ecy:ECSE_0850"/>
<dbReference type="HOGENOM" id="CLU_018816_6_3_6"/>
<dbReference type="Proteomes" id="UP000008199">
    <property type="component" value="Chromosome"/>
</dbReference>
<dbReference type="GO" id="GO:0042597">
    <property type="term" value="C:periplasmic space"/>
    <property type="evidence" value="ECO:0007669"/>
    <property type="project" value="UniProtKB-SubCell"/>
</dbReference>
<dbReference type="FunFam" id="1.10.287.470:FF:000004">
    <property type="entry name" value="UPF0194 membrane protein YbhG"/>
    <property type="match status" value="1"/>
</dbReference>
<dbReference type="FunFam" id="2.40.30.170:FF:000005">
    <property type="entry name" value="UPF0194 membrane protein YbhG"/>
    <property type="match status" value="1"/>
</dbReference>
<dbReference type="FunFam" id="2.40.50.100:FF:000025">
    <property type="entry name" value="UPF0194 membrane protein YbhG"/>
    <property type="match status" value="1"/>
</dbReference>
<dbReference type="Gene3D" id="2.40.30.170">
    <property type="match status" value="1"/>
</dbReference>
<dbReference type="Gene3D" id="2.40.50.100">
    <property type="match status" value="2"/>
</dbReference>
<dbReference type="Gene3D" id="1.10.287.470">
    <property type="entry name" value="Helix hairpin bin"/>
    <property type="match status" value="2"/>
</dbReference>
<dbReference type="HAMAP" id="MF_01304">
    <property type="entry name" value="UPF0194"/>
    <property type="match status" value="1"/>
</dbReference>
<dbReference type="InterPro" id="IPR032317">
    <property type="entry name" value="CusB_D23"/>
</dbReference>
<dbReference type="InterPro" id="IPR022936">
    <property type="entry name" value="UPF0194_membrane_YbhG"/>
</dbReference>
<dbReference type="InterPro" id="IPR050465">
    <property type="entry name" value="UPF0194_transport"/>
</dbReference>
<dbReference type="NCBIfam" id="NF002939">
    <property type="entry name" value="PRK03598.1"/>
    <property type="match status" value="1"/>
</dbReference>
<dbReference type="PANTHER" id="PTHR32347">
    <property type="entry name" value="EFFLUX SYSTEM COMPONENT YKNX-RELATED"/>
    <property type="match status" value="1"/>
</dbReference>
<dbReference type="PANTHER" id="PTHR32347:SF29">
    <property type="entry name" value="UPF0194 MEMBRANE PROTEIN YBHG"/>
    <property type="match status" value="1"/>
</dbReference>
<dbReference type="Pfam" id="PF16576">
    <property type="entry name" value="HlyD_D23"/>
    <property type="match status" value="1"/>
</dbReference>
<dbReference type="SUPFAM" id="SSF111369">
    <property type="entry name" value="HlyD-like secretion proteins"/>
    <property type="match status" value="2"/>
</dbReference>
<dbReference type="SUPFAM" id="SSF56954">
    <property type="entry name" value="Outer membrane efflux proteins (OEP)"/>
    <property type="match status" value="1"/>
</dbReference>
<organism>
    <name type="scientific">Escherichia coli (strain SE11)</name>
    <dbReference type="NCBI Taxonomy" id="409438"/>
    <lineage>
        <taxon>Bacteria</taxon>
        <taxon>Pseudomonadati</taxon>
        <taxon>Pseudomonadota</taxon>
        <taxon>Gammaproteobacteria</taxon>
        <taxon>Enterobacterales</taxon>
        <taxon>Enterobacteriaceae</taxon>
        <taxon>Escherichia</taxon>
    </lineage>
</organism>
<feature type="signal peptide" evidence="1">
    <location>
        <begin position="1"/>
        <end position="16"/>
    </location>
</feature>
<feature type="chain" id="PRO_1000140654" description="UPF0194 membrane protein YbhG">
    <location>
        <begin position="17"/>
        <end position="332"/>
    </location>
</feature>
<feature type="coiled-coil region" evidence="1">
    <location>
        <begin position="108"/>
        <end position="209"/>
    </location>
</feature>
<protein>
    <recommendedName>
        <fullName evidence="1">UPF0194 membrane protein YbhG</fullName>
    </recommendedName>
</protein>
<gene>
    <name evidence="1" type="primary">ybhG</name>
    <name type="ordered locus">ECSE_0850</name>
</gene>
<reference key="1">
    <citation type="journal article" date="2008" name="DNA Res.">
        <title>Complete genome sequence and comparative analysis of the wild-type commensal Escherichia coli strain SE11 isolated from a healthy adult.</title>
        <authorList>
            <person name="Oshima K."/>
            <person name="Toh H."/>
            <person name="Ogura Y."/>
            <person name="Sasamoto H."/>
            <person name="Morita H."/>
            <person name="Park S.-H."/>
            <person name="Ooka T."/>
            <person name="Iyoda S."/>
            <person name="Taylor T.D."/>
            <person name="Hayashi T."/>
            <person name="Itoh K."/>
            <person name="Hattori M."/>
        </authorList>
    </citation>
    <scope>NUCLEOTIDE SEQUENCE [LARGE SCALE GENOMIC DNA]</scope>
    <source>
        <strain>SE11</strain>
    </source>
</reference>
<name>YBHG_ECOSE</name>
<keyword id="KW-0175">Coiled coil</keyword>
<keyword id="KW-0574">Periplasm</keyword>
<keyword id="KW-0732">Signal</keyword>